<organism>
    <name type="scientific">Rickettsia felis (strain ATCC VR-1525 / URRWXCal2)</name>
    <name type="common">Rickettsia azadi</name>
    <dbReference type="NCBI Taxonomy" id="315456"/>
    <lineage>
        <taxon>Bacteria</taxon>
        <taxon>Pseudomonadati</taxon>
        <taxon>Pseudomonadota</taxon>
        <taxon>Alphaproteobacteria</taxon>
        <taxon>Rickettsiales</taxon>
        <taxon>Rickettsiaceae</taxon>
        <taxon>Rickettsieae</taxon>
        <taxon>Rickettsia</taxon>
        <taxon>spotted fever group</taxon>
    </lineage>
</organism>
<dbReference type="EC" id="6.1.1.19" evidence="1"/>
<dbReference type="EMBL" id="CP000053">
    <property type="protein sequence ID" value="AAY60960.1"/>
    <property type="molecule type" value="Genomic_DNA"/>
</dbReference>
<dbReference type="SMR" id="Q4UN98"/>
<dbReference type="STRING" id="315456.RF_0109"/>
<dbReference type="KEGG" id="rfe:RF_0109"/>
<dbReference type="eggNOG" id="COG0018">
    <property type="taxonomic scope" value="Bacteria"/>
</dbReference>
<dbReference type="HOGENOM" id="CLU_006406_0_1_5"/>
<dbReference type="OrthoDB" id="9803211at2"/>
<dbReference type="Proteomes" id="UP000008548">
    <property type="component" value="Chromosome"/>
</dbReference>
<dbReference type="GO" id="GO:0005737">
    <property type="term" value="C:cytoplasm"/>
    <property type="evidence" value="ECO:0007669"/>
    <property type="project" value="UniProtKB-SubCell"/>
</dbReference>
<dbReference type="GO" id="GO:0004814">
    <property type="term" value="F:arginine-tRNA ligase activity"/>
    <property type="evidence" value="ECO:0007669"/>
    <property type="project" value="UniProtKB-UniRule"/>
</dbReference>
<dbReference type="GO" id="GO:0005524">
    <property type="term" value="F:ATP binding"/>
    <property type="evidence" value="ECO:0007669"/>
    <property type="project" value="UniProtKB-UniRule"/>
</dbReference>
<dbReference type="GO" id="GO:0006420">
    <property type="term" value="P:arginyl-tRNA aminoacylation"/>
    <property type="evidence" value="ECO:0007669"/>
    <property type="project" value="UniProtKB-UniRule"/>
</dbReference>
<dbReference type="CDD" id="cd00671">
    <property type="entry name" value="ArgRS_core"/>
    <property type="match status" value="1"/>
</dbReference>
<dbReference type="Gene3D" id="3.30.1360.70">
    <property type="entry name" value="Arginyl tRNA synthetase N-terminal domain"/>
    <property type="match status" value="1"/>
</dbReference>
<dbReference type="Gene3D" id="3.40.50.620">
    <property type="entry name" value="HUPs"/>
    <property type="match status" value="1"/>
</dbReference>
<dbReference type="Gene3D" id="1.10.730.10">
    <property type="entry name" value="Isoleucyl-tRNA Synthetase, Domain 1"/>
    <property type="match status" value="1"/>
</dbReference>
<dbReference type="HAMAP" id="MF_00123">
    <property type="entry name" value="Arg_tRNA_synth"/>
    <property type="match status" value="1"/>
</dbReference>
<dbReference type="InterPro" id="IPR001412">
    <property type="entry name" value="aa-tRNA-synth_I_CS"/>
</dbReference>
<dbReference type="InterPro" id="IPR001278">
    <property type="entry name" value="Arg-tRNA-ligase"/>
</dbReference>
<dbReference type="InterPro" id="IPR005148">
    <property type="entry name" value="Arg-tRNA-synth_N"/>
</dbReference>
<dbReference type="InterPro" id="IPR036695">
    <property type="entry name" value="Arg-tRNA-synth_N_sf"/>
</dbReference>
<dbReference type="InterPro" id="IPR035684">
    <property type="entry name" value="ArgRS_core"/>
</dbReference>
<dbReference type="InterPro" id="IPR008909">
    <property type="entry name" value="DALR_anticod-bd"/>
</dbReference>
<dbReference type="InterPro" id="IPR014729">
    <property type="entry name" value="Rossmann-like_a/b/a_fold"/>
</dbReference>
<dbReference type="InterPro" id="IPR009080">
    <property type="entry name" value="tRNAsynth_Ia_anticodon-bd"/>
</dbReference>
<dbReference type="NCBIfam" id="TIGR00456">
    <property type="entry name" value="argS"/>
    <property type="match status" value="1"/>
</dbReference>
<dbReference type="PANTHER" id="PTHR11956:SF5">
    <property type="entry name" value="ARGININE--TRNA LIGASE, CYTOPLASMIC"/>
    <property type="match status" value="1"/>
</dbReference>
<dbReference type="PANTHER" id="PTHR11956">
    <property type="entry name" value="ARGINYL-TRNA SYNTHETASE"/>
    <property type="match status" value="1"/>
</dbReference>
<dbReference type="Pfam" id="PF03485">
    <property type="entry name" value="Arg_tRNA_synt_N"/>
    <property type="match status" value="1"/>
</dbReference>
<dbReference type="Pfam" id="PF05746">
    <property type="entry name" value="DALR_1"/>
    <property type="match status" value="1"/>
</dbReference>
<dbReference type="Pfam" id="PF00750">
    <property type="entry name" value="tRNA-synt_1d"/>
    <property type="match status" value="1"/>
</dbReference>
<dbReference type="PRINTS" id="PR01038">
    <property type="entry name" value="TRNASYNTHARG"/>
</dbReference>
<dbReference type="SMART" id="SM01016">
    <property type="entry name" value="Arg_tRNA_synt_N"/>
    <property type="match status" value="1"/>
</dbReference>
<dbReference type="SMART" id="SM00836">
    <property type="entry name" value="DALR_1"/>
    <property type="match status" value="1"/>
</dbReference>
<dbReference type="SUPFAM" id="SSF47323">
    <property type="entry name" value="Anticodon-binding domain of a subclass of class I aminoacyl-tRNA synthetases"/>
    <property type="match status" value="1"/>
</dbReference>
<dbReference type="SUPFAM" id="SSF55190">
    <property type="entry name" value="Arginyl-tRNA synthetase (ArgRS), N-terminal 'additional' domain"/>
    <property type="match status" value="1"/>
</dbReference>
<dbReference type="SUPFAM" id="SSF52374">
    <property type="entry name" value="Nucleotidylyl transferase"/>
    <property type="match status" value="1"/>
</dbReference>
<dbReference type="PROSITE" id="PS00178">
    <property type="entry name" value="AA_TRNA_LIGASE_I"/>
    <property type="match status" value="1"/>
</dbReference>
<protein>
    <recommendedName>
        <fullName evidence="1">Arginine--tRNA ligase</fullName>
        <ecNumber evidence="1">6.1.1.19</ecNumber>
    </recommendedName>
    <alternativeName>
        <fullName evidence="1">Arginyl-tRNA synthetase</fullName>
        <shortName evidence="1">ArgRS</shortName>
    </alternativeName>
</protein>
<accession>Q4UN98</accession>
<keyword id="KW-0030">Aminoacyl-tRNA synthetase</keyword>
<keyword id="KW-0067">ATP-binding</keyword>
<keyword id="KW-0963">Cytoplasm</keyword>
<keyword id="KW-0436">Ligase</keyword>
<keyword id="KW-0547">Nucleotide-binding</keyword>
<keyword id="KW-0648">Protein biosynthesis</keyword>
<comment type="catalytic activity">
    <reaction evidence="1">
        <text>tRNA(Arg) + L-arginine + ATP = L-arginyl-tRNA(Arg) + AMP + diphosphate</text>
        <dbReference type="Rhea" id="RHEA:20301"/>
        <dbReference type="Rhea" id="RHEA-COMP:9658"/>
        <dbReference type="Rhea" id="RHEA-COMP:9673"/>
        <dbReference type="ChEBI" id="CHEBI:30616"/>
        <dbReference type="ChEBI" id="CHEBI:32682"/>
        <dbReference type="ChEBI" id="CHEBI:33019"/>
        <dbReference type="ChEBI" id="CHEBI:78442"/>
        <dbReference type="ChEBI" id="CHEBI:78513"/>
        <dbReference type="ChEBI" id="CHEBI:456215"/>
        <dbReference type="EC" id="6.1.1.19"/>
    </reaction>
</comment>
<comment type="subunit">
    <text evidence="1">Monomer.</text>
</comment>
<comment type="subcellular location">
    <subcellularLocation>
        <location evidence="1">Cytoplasm</location>
    </subcellularLocation>
</comment>
<comment type="similarity">
    <text evidence="1">Belongs to the class-I aminoacyl-tRNA synthetase family.</text>
</comment>
<evidence type="ECO:0000255" key="1">
    <source>
        <dbReference type="HAMAP-Rule" id="MF_00123"/>
    </source>
</evidence>
<reference key="1">
    <citation type="journal article" date="2005" name="PLoS Biol.">
        <title>The genome sequence of Rickettsia felis identifies the first putative conjugative plasmid in an obligate intracellular parasite.</title>
        <authorList>
            <person name="Ogata H."/>
            <person name="Renesto P."/>
            <person name="Audic S."/>
            <person name="Robert C."/>
            <person name="Blanc G."/>
            <person name="Fournier P.-E."/>
            <person name="Parinello H."/>
            <person name="Claverie J.-M."/>
            <person name="Raoult D."/>
        </authorList>
    </citation>
    <scope>NUCLEOTIDE SEQUENCE [LARGE SCALE GENOMIC DNA]</scope>
    <source>
        <strain>ATCC VR-1525 / URRWXCal2</strain>
    </source>
</reference>
<gene>
    <name evidence="1" type="primary">argS</name>
    <name type="ordered locus">RF_0109</name>
</gene>
<proteinExistence type="inferred from homology"/>
<name>SYR_RICFE</name>
<sequence length="576" mass="65157">MNIFNQLKQDIIAASKQLYNNQEIANTANIETPKDNFNGDLSSNIAMIIAAKESISPREVALKFKEVLTTLPYIASIEIAGPGFINFTIKAESWQASIKDILQHEEKFFEIDIDKSRNINIEYVSANPTGPMHIGHARGAVYGDVLARILQKVGYSVTKEYYVNDAGSQINDLVSTVLLRYREALGEKITIPAGLYPGEYLIPLGQILAKEYGNKLLTMNENERFKIVKNFAVEKMLDLNRKDLADLGIKHDIFFSEQSLHDKGEIEGTVKLLTGMGLIYEGTLPAPKGKVHEEWDNRVQKLFKSTNYGDSQDRPIEKADGSWSYFASDLAYAKDKIDRGANHLIYVLGADHSGYVKRIEAIVKALGKEQVKVDVKICQLVNFVENGVPVKMSKRLGNFASVQDVNHEVGKDIIRFMMLTRQNDKPLDFDLVKVKEQSRENPIFYVQYAHVRTISILSKARELMPESYNNFEEGKYDLSLLSSEEEIEIIKLLASWTKTLEASAKYFEPHRIAFYLINLASRFHSMWNFGKENSDYRFVIESNKELTLARLALASAIQKVIASGLEVIGVEPMDRM</sequence>
<feature type="chain" id="PRO_0000242084" description="Arginine--tRNA ligase">
    <location>
        <begin position="1"/>
        <end position="576"/>
    </location>
</feature>
<feature type="short sequence motif" description="'HIGH' region">
    <location>
        <begin position="126"/>
        <end position="136"/>
    </location>
</feature>